<dbReference type="EC" id="4.1.3.27"/>
<dbReference type="EMBL" id="JQ934965">
    <property type="protein sequence ID" value="AFO38175.1"/>
    <property type="molecule type" value="Genomic_DNA"/>
</dbReference>
<dbReference type="EMBL" id="AL123456">
    <property type="protein sequence ID" value="CCP44373.1"/>
    <property type="molecule type" value="Genomic_DNA"/>
</dbReference>
<dbReference type="PIR" id="G70556">
    <property type="entry name" value="G70556"/>
</dbReference>
<dbReference type="RefSeq" id="NP_216125.1">
    <property type="nucleotide sequence ID" value="NC_000962.3"/>
</dbReference>
<dbReference type="RefSeq" id="WP_003407977.1">
    <property type="nucleotide sequence ID" value="NZ_NVQJ01000016.1"/>
</dbReference>
<dbReference type="SMR" id="P9WFX3"/>
<dbReference type="FunCoup" id="P9WFX3">
    <property type="interactions" value="369"/>
</dbReference>
<dbReference type="STRING" id="83332.Rv1609"/>
<dbReference type="PaxDb" id="83332-Rv1609"/>
<dbReference type="GeneID" id="885040"/>
<dbReference type="KEGG" id="mtu:Rv1609"/>
<dbReference type="KEGG" id="mtv:RVBD_1609"/>
<dbReference type="TubercuList" id="Rv1609"/>
<dbReference type="eggNOG" id="COG1169">
    <property type="taxonomic scope" value="Bacteria"/>
</dbReference>
<dbReference type="InParanoid" id="P9WFX3"/>
<dbReference type="OrthoDB" id="3518032at2"/>
<dbReference type="PhylomeDB" id="P9WFX3"/>
<dbReference type="BRENDA" id="4.1.3.27">
    <property type="organism ID" value="3445"/>
</dbReference>
<dbReference type="UniPathway" id="UPA00035">
    <property type="reaction ID" value="UER00040"/>
</dbReference>
<dbReference type="Proteomes" id="UP000001584">
    <property type="component" value="Chromosome"/>
</dbReference>
<dbReference type="GO" id="GO:0005886">
    <property type="term" value="C:plasma membrane"/>
    <property type="evidence" value="ECO:0007005"/>
    <property type="project" value="MTBBASE"/>
</dbReference>
<dbReference type="GO" id="GO:0004049">
    <property type="term" value="F:anthranilate synthase activity"/>
    <property type="evidence" value="ECO:0000314"/>
    <property type="project" value="MTBBASE"/>
</dbReference>
<dbReference type="GO" id="GO:0000287">
    <property type="term" value="F:magnesium ion binding"/>
    <property type="evidence" value="ECO:0000314"/>
    <property type="project" value="MTBBASE"/>
</dbReference>
<dbReference type="GO" id="GO:0000162">
    <property type="term" value="P:L-tryptophan biosynthetic process"/>
    <property type="evidence" value="ECO:0000314"/>
    <property type="project" value="MTBBASE"/>
</dbReference>
<dbReference type="FunFam" id="3.60.120.10:FF:000008">
    <property type="entry name" value="Anthranilate synthase component 1"/>
    <property type="match status" value="1"/>
</dbReference>
<dbReference type="Gene3D" id="3.60.120.10">
    <property type="entry name" value="Anthranilate synthase"/>
    <property type="match status" value="1"/>
</dbReference>
<dbReference type="InterPro" id="IPR005801">
    <property type="entry name" value="ADC_synthase"/>
</dbReference>
<dbReference type="InterPro" id="IPR019999">
    <property type="entry name" value="Anth_synth_I-like"/>
</dbReference>
<dbReference type="InterPro" id="IPR006805">
    <property type="entry name" value="Anth_synth_I_N"/>
</dbReference>
<dbReference type="InterPro" id="IPR005256">
    <property type="entry name" value="Anth_synth_I_PabB"/>
</dbReference>
<dbReference type="InterPro" id="IPR015890">
    <property type="entry name" value="Chorismate_C"/>
</dbReference>
<dbReference type="NCBIfam" id="NF010086">
    <property type="entry name" value="PRK13571.1"/>
    <property type="match status" value="1"/>
</dbReference>
<dbReference type="NCBIfam" id="TIGR00564">
    <property type="entry name" value="trpE_most"/>
    <property type="match status" value="1"/>
</dbReference>
<dbReference type="PANTHER" id="PTHR11236">
    <property type="entry name" value="AMINOBENZOATE/ANTHRANILATE SYNTHASE"/>
    <property type="match status" value="1"/>
</dbReference>
<dbReference type="PANTHER" id="PTHR11236:SF46">
    <property type="entry name" value="ANTHRANILATE SYNTHASE COMPONENT 1"/>
    <property type="match status" value="1"/>
</dbReference>
<dbReference type="Pfam" id="PF04715">
    <property type="entry name" value="Anth_synt_I_N"/>
    <property type="match status" value="1"/>
</dbReference>
<dbReference type="Pfam" id="PF00425">
    <property type="entry name" value="Chorismate_bind"/>
    <property type="match status" value="1"/>
</dbReference>
<dbReference type="PRINTS" id="PR00095">
    <property type="entry name" value="ANTSNTHASEI"/>
</dbReference>
<dbReference type="SUPFAM" id="SSF56322">
    <property type="entry name" value="ADC synthase"/>
    <property type="match status" value="1"/>
</dbReference>
<organism>
    <name type="scientific">Mycobacterium tuberculosis (strain ATCC 25618 / H37Rv)</name>
    <dbReference type="NCBI Taxonomy" id="83332"/>
    <lineage>
        <taxon>Bacteria</taxon>
        <taxon>Bacillati</taxon>
        <taxon>Actinomycetota</taxon>
        <taxon>Actinomycetes</taxon>
        <taxon>Mycobacteriales</taxon>
        <taxon>Mycobacteriaceae</taxon>
        <taxon>Mycobacterium</taxon>
        <taxon>Mycobacterium tuberculosis complex</taxon>
    </lineage>
</organism>
<keyword id="KW-0028">Amino-acid biosynthesis</keyword>
<keyword id="KW-0057">Aromatic amino acid biosynthesis</keyword>
<keyword id="KW-0456">Lyase</keyword>
<keyword id="KW-0460">Magnesium</keyword>
<keyword id="KW-0479">Metal-binding</keyword>
<keyword id="KW-1185">Reference proteome</keyword>
<keyword id="KW-0822">Tryptophan biosynthesis</keyword>
<proteinExistence type="evidence at protein level"/>
<comment type="function">
    <text evidence="1">Part of a heterotetrameric complex that catalyzes the two-step biosynthesis of anthranilate, an intermediate in the biosynthesis of L-tryptophan. In the first step, the glutamine-binding beta subunit (TrpG) of anthranilate synthase (AS) provides the glutamine amidotransferase activity which generates ammonia as a substrate that, along with chorismate, is used in the second step, catalyzed by the large alpha subunit of AS (TrpE) to produce anthranilate. In the absence of TrpG, TrpE can synthesize anthranilate directly from chorismate and high concentrations of ammonia (By similarity).</text>
</comment>
<comment type="catalytic activity">
    <reaction>
        <text>chorismate + L-glutamine = anthranilate + pyruvate + L-glutamate + H(+)</text>
        <dbReference type="Rhea" id="RHEA:21732"/>
        <dbReference type="ChEBI" id="CHEBI:15361"/>
        <dbReference type="ChEBI" id="CHEBI:15378"/>
        <dbReference type="ChEBI" id="CHEBI:16567"/>
        <dbReference type="ChEBI" id="CHEBI:29748"/>
        <dbReference type="ChEBI" id="CHEBI:29985"/>
        <dbReference type="ChEBI" id="CHEBI:58359"/>
        <dbReference type="EC" id="4.1.3.27"/>
    </reaction>
</comment>
<comment type="cofactor">
    <cofactor evidence="2">
        <name>Mg(2+)</name>
        <dbReference type="ChEBI" id="CHEBI:18420"/>
    </cofactor>
    <text evidence="2">Binds 1 Mg(2+) ion per subunit.</text>
</comment>
<comment type="activity regulation">
    <text evidence="1">Feedback inhibited by tryptophan.</text>
</comment>
<comment type="pathway">
    <text>Amino-acid biosynthesis; L-tryptophan biosynthesis; L-tryptophan from chorismate: step 1/5.</text>
</comment>
<comment type="subunit">
    <text evidence="1">Heterotetramer consisting of two non-identical subunits: a beta subunit (TrpG) and a large alpha subunit (TrpE).</text>
</comment>
<comment type="similarity">
    <text evidence="3">Belongs to the anthranilate synthase component I family.</text>
</comment>
<protein>
    <recommendedName>
        <fullName>Anthranilate synthase component 1</fullName>
        <shortName>AS</shortName>
        <shortName>ASI</shortName>
        <ecNumber>4.1.3.27</ecNumber>
    </recommendedName>
</protein>
<evidence type="ECO:0000250" key="1"/>
<evidence type="ECO:0000250" key="2">
    <source>
        <dbReference type="UniProtKB" id="P00897"/>
    </source>
</evidence>
<evidence type="ECO:0000305" key="3"/>
<sequence>MHADLAATTSREDFRLLAAEHRVVPVTRKVLADSETPLSAYRKLAANRPGTFLLESAENGRSWSRWSFIGAGAPTALTVREGQAVWLGAVPKDAPTGGDPLRALQVTLELLATADRQSEPGLPPLSGGMVGFFAYDMVRRLERLPERAVDDLCLPDMLLLLATDVAAVDHHEGTITLIANAVNWNGTDERVDWAYDDAVARLDVMTAALGQPLPSTVATFSRPEPRHRAQRTVEEYGAIVEYLVDQIAAGEAFQVVPSQRFEMDTDVDPIDVYRILRVTNPSPYMYLLQVPNSDGAVDFSIVGSSPEALVTVHEGWATTHPIAGTRWRGRTDDEDVLLEKELLADDKERAEHLMLVDLGRNDLGRVCTPGTVRVEDYSHIERYSHVMHLVSTVTGKLGEGRTALDAVTACFPAGTLSGAPKVRAMELIEEVEKTRRGLYGGVVGYLDFAGNADFAIAIRTALMRNGTAYVQAGGGVVADSNGSYEYNEARNKARAVLNAIAAAETLAAPGANRSGC</sequence>
<name>TRPE_MYCTU</name>
<feature type="chain" id="PRO_0000154099" description="Anthranilate synthase component 1">
    <location>
        <begin position="1"/>
        <end position="516"/>
    </location>
</feature>
<feature type="binding site" evidence="2">
    <location>
        <position position="56"/>
    </location>
    <ligand>
        <name>L-tryptophan</name>
        <dbReference type="ChEBI" id="CHEBI:57912"/>
    </ligand>
</feature>
<feature type="binding site" evidence="2">
    <location>
        <begin position="283"/>
        <end position="285"/>
    </location>
    <ligand>
        <name>L-tryptophan</name>
        <dbReference type="ChEBI" id="CHEBI:57912"/>
    </ligand>
</feature>
<feature type="binding site" evidence="2">
    <location>
        <begin position="324"/>
        <end position="325"/>
    </location>
    <ligand>
        <name>chorismate</name>
        <dbReference type="ChEBI" id="CHEBI:29748"/>
    </ligand>
</feature>
<feature type="binding site" evidence="2">
    <location>
        <position position="351"/>
    </location>
    <ligand>
        <name>Mg(2+)</name>
        <dbReference type="ChEBI" id="CHEBI:18420"/>
    </ligand>
</feature>
<feature type="binding site" evidence="2">
    <location>
        <position position="439"/>
    </location>
    <ligand>
        <name>chorismate</name>
        <dbReference type="ChEBI" id="CHEBI:29748"/>
    </ligand>
</feature>
<feature type="binding site" evidence="2">
    <location>
        <position position="459"/>
    </location>
    <ligand>
        <name>chorismate</name>
        <dbReference type="ChEBI" id="CHEBI:29748"/>
    </ligand>
</feature>
<feature type="binding site" evidence="2">
    <location>
        <begin position="473"/>
        <end position="475"/>
    </location>
    <ligand>
        <name>chorismate</name>
        <dbReference type="ChEBI" id="CHEBI:29748"/>
    </ligand>
</feature>
<feature type="binding site" evidence="2">
    <location>
        <position position="475"/>
    </location>
    <ligand>
        <name>chorismate</name>
        <dbReference type="ChEBI" id="CHEBI:29748"/>
    </ligand>
</feature>
<feature type="binding site" evidence="2">
    <location>
        <position position="488"/>
    </location>
    <ligand>
        <name>Mg(2+)</name>
        <dbReference type="ChEBI" id="CHEBI:18420"/>
    </ligand>
</feature>
<gene>
    <name type="primary">trpE</name>
    <name type="ordered locus">Rv1609</name>
    <name type="ORF">MTCY01B2.01</name>
    <name type="ORF">MTV046.07</name>
</gene>
<accession>P9WFX3</accession>
<accession>I7BEI8</accession>
<accession>O06127</accession>
<accession>P67001</accession>
<reference key="1">
    <citation type="submission" date="2012-04" db="EMBL/GenBank/DDBJ databases">
        <authorList>
            <person name="Naresh Kumar K."/>
            <person name="Suresh Kumar C."/>
            <person name="Subramanyam K."/>
            <person name="Subba Rao D."/>
        </authorList>
    </citation>
    <scope>NUCLEOTIDE SEQUENCE [GENOMIC DNA]</scope>
    <source>
        <strain>MTCC 400</strain>
    </source>
</reference>
<reference key="2">
    <citation type="journal article" date="1998" name="Nature">
        <title>Deciphering the biology of Mycobacterium tuberculosis from the complete genome sequence.</title>
        <authorList>
            <person name="Cole S.T."/>
            <person name="Brosch R."/>
            <person name="Parkhill J."/>
            <person name="Garnier T."/>
            <person name="Churcher C.M."/>
            <person name="Harris D.E."/>
            <person name="Gordon S.V."/>
            <person name="Eiglmeier K."/>
            <person name="Gas S."/>
            <person name="Barry C.E. III"/>
            <person name="Tekaia F."/>
            <person name="Badcock K."/>
            <person name="Basham D."/>
            <person name="Brown D."/>
            <person name="Chillingworth T."/>
            <person name="Connor R."/>
            <person name="Davies R.M."/>
            <person name="Devlin K."/>
            <person name="Feltwell T."/>
            <person name="Gentles S."/>
            <person name="Hamlin N."/>
            <person name="Holroyd S."/>
            <person name="Hornsby T."/>
            <person name="Jagels K."/>
            <person name="Krogh A."/>
            <person name="McLean J."/>
            <person name="Moule S."/>
            <person name="Murphy L.D."/>
            <person name="Oliver S."/>
            <person name="Osborne J."/>
            <person name="Quail M.A."/>
            <person name="Rajandream M.A."/>
            <person name="Rogers J."/>
            <person name="Rutter S."/>
            <person name="Seeger K."/>
            <person name="Skelton S."/>
            <person name="Squares S."/>
            <person name="Squares R."/>
            <person name="Sulston J.E."/>
            <person name="Taylor K."/>
            <person name="Whitehead S."/>
            <person name="Barrell B.G."/>
        </authorList>
    </citation>
    <scope>NUCLEOTIDE SEQUENCE [LARGE SCALE GENOMIC DNA]</scope>
    <source>
        <strain>ATCC 25618 / H37Rv</strain>
    </source>
</reference>
<reference key="3">
    <citation type="journal article" date="2011" name="Mol. Cell. Proteomics">
        <title>Proteogenomic analysis of Mycobacterium tuberculosis by high resolution mass spectrometry.</title>
        <authorList>
            <person name="Kelkar D.S."/>
            <person name="Kumar D."/>
            <person name="Kumar P."/>
            <person name="Balakrishnan L."/>
            <person name="Muthusamy B."/>
            <person name="Yadav A.K."/>
            <person name="Shrivastava P."/>
            <person name="Marimuthu A."/>
            <person name="Anand S."/>
            <person name="Sundaram H."/>
            <person name="Kingsbury R."/>
            <person name="Harsha H.C."/>
            <person name="Nair B."/>
            <person name="Prasad T.S."/>
            <person name="Chauhan D.S."/>
            <person name="Katoch K."/>
            <person name="Katoch V.M."/>
            <person name="Kumar P."/>
            <person name="Chaerkady R."/>
            <person name="Ramachandran S."/>
            <person name="Dash D."/>
            <person name="Pandey A."/>
        </authorList>
    </citation>
    <scope>IDENTIFICATION BY MASS SPECTROMETRY [LARGE SCALE ANALYSIS]</scope>
    <source>
        <strain>ATCC 25618 / H37Rv</strain>
    </source>
</reference>